<evidence type="ECO:0000255" key="1">
    <source>
        <dbReference type="HAMAP-Rule" id="MF_00204"/>
    </source>
</evidence>
<evidence type="ECO:0000256" key="2">
    <source>
        <dbReference type="SAM" id="MobiDB-lite"/>
    </source>
</evidence>
<reference key="1">
    <citation type="journal article" date="2005" name="Proc. Natl. Acad. Sci. U.S.A.">
        <title>Whole genome sequence of Staphylococcus saprophyticus reveals the pathogenesis of uncomplicated urinary tract infection.</title>
        <authorList>
            <person name="Kuroda M."/>
            <person name="Yamashita A."/>
            <person name="Hirakawa H."/>
            <person name="Kumano M."/>
            <person name="Morikawa K."/>
            <person name="Higashide M."/>
            <person name="Maruyama A."/>
            <person name="Inose Y."/>
            <person name="Matoba K."/>
            <person name="Toh H."/>
            <person name="Kuhara S."/>
            <person name="Hattori M."/>
            <person name="Ohta T."/>
        </authorList>
    </citation>
    <scope>NUCLEOTIDE SEQUENCE [LARGE SCALE GENOMIC DNA]</scope>
    <source>
        <strain>ATCC 15305 / DSM 20229 / NCIMB 8711 / NCTC 7292 / S-41</strain>
    </source>
</reference>
<dbReference type="EMBL" id="AP008934">
    <property type="protein sequence ID" value="BAE19104.1"/>
    <property type="molecule type" value="Genomic_DNA"/>
</dbReference>
<dbReference type="RefSeq" id="WP_011303628.1">
    <property type="nucleotide sequence ID" value="NZ_MTGA01000039.1"/>
</dbReference>
<dbReference type="SMR" id="Q49VV6"/>
<dbReference type="GeneID" id="3616770"/>
<dbReference type="KEGG" id="ssp:SSP1959"/>
<dbReference type="PATRIC" id="fig|342451.11.peg.1952"/>
<dbReference type="eggNOG" id="COG0556">
    <property type="taxonomic scope" value="Bacteria"/>
</dbReference>
<dbReference type="HOGENOM" id="CLU_009621_2_1_9"/>
<dbReference type="OrthoDB" id="9806651at2"/>
<dbReference type="Proteomes" id="UP000006371">
    <property type="component" value="Chromosome"/>
</dbReference>
<dbReference type="GO" id="GO:0005737">
    <property type="term" value="C:cytoplasm"/>
    <property type="evidence" value="ECO:0007669"/>
    <property type="project" value="UniProtKB-SubCell"/>
</dbReference>
<dbReference type="GO" id="GO:0009380">
    <property type="term" value="C:excinuclease repair complex"/>
    <property type="evidence" value="ECO:0007669"/>
    <property type="project" value="InterPro"/>
</dbReference>
<dbReference type="GO" id="GO:0005524">
    <property type="term" value="F:ATP binding"/>
    <property type="evidence" value="ECO:0007669"/>
    <property type="project" value="UniProtKB-UniRule"/>
</dbReference>
<dbReference type="GO" id="GO:0016887">
    <property type="term" value="F:ATP hydrolysis activity"/>
    <property type="evidence" value="ECO:0007669"/>
    <property type="project" value="InterPro"/>
</dbReference>
<dbReference type="GO" id="GO:0003677">
    <property type="term" value="F:DNA binding"/>
    <property type="evidence" value="ECO:0007669"/>
    <property type="project" value="UniProtKB-UniRule"/>
</dbReference>
<dbReference type="GO" id="GO:0009381">
    <property type="term" value="F:excinuclease ABC activity"/>
    <property type="evidence" value="ECO:0007669"/>
    <property type="project" value="UniProtKB-UniRule"/>
</dbReference>
<dbReference type="GO" id="GO:0006289">
    <property type="term" value="P:nucleotide-excision repair"/>
    <property type="evidence" value="ECO:0007669"/>
    <property type="project" value="UniProtKB-UniRule"/>
</dbReference>
<dbReference type="GO" id="GO:0009432">
    <property type="term" value="P:SOS response"/>
    <property type="evidence" value="ECO:0007669"/>
    <property type="project" value="UniProtKB-UniRule"/>
</dbReference>
<dbReference type="CDD" id="cd17916">
    <property type="entry name" value="DEXHc_UvrB"/>
    <property type="match status" value="1"/>
</dbReference>
<dbReference type="CDD" id="cd18790">
    <property type="entry name" value="SF2_C_UvrB"/>
    <property type="match status" value="1"/>
</dbReference>
<dbReference type="Gene3D" id="3.40.50.300">
    <property type="entry name" value="P-loop containing nucleotide triphosphate hydrolases"/>
    <property type="match status" value="3"/>
</dbReference>
<dbReference type="Gene3D" id="4.10.860.10">
    <property type="entry name" value="UVR domain"/>
    <property type="match status" value="1"/>
</dbReference>
<dbReference type="HAMAP" id="MF_00204">
    <property type="entry name" value="UvrB"/>
    <property type="match status" value="1"/>
</dbReference>
<dbReference type="InterPro" id="IPR006935">
    <property type="entry name" value="Helicase/UvrB_N"/>
</dbReference>
<dbReference type="InterPro" id="IPR014001">
    <property type="entry name" value="Helicase_ATP-bd"/>
</dbReference>
<dbReference type="InterPro" id="IPR001650">
    <property type="entry name" value="Helicase_C-like"/>
</dbReference>
<dbReference type="InterPro" id="IPR027417">
    <property type="entry name" value="P-loop_NTPase"/>
</dbReference>
<dbReference type="InterPro" id="IPR001943">
    <property type="entry name" value="UVR_dom"/>
</dbReference>
<dbReference type="InterPro" id="IPR036876">
    <property type="entry name" value="UVR_dom_sf"/>
</dbReference>
<dbReference type="InterPro" id="IPR004807">
    <property type="entry name" value="UvrB"/>
</dbReference>
<dbReference type="InterPro" id="IPR041471">
    <property type="entry name" value="UvrB_inter"/>
</dbReference>
<dbReference type="InterPro" id="IPR024759">
    <property type="entry name" value="UvrB_YAD/RRR_dom"/>
</dbReference>
<dbReference type="NCBIfam" id="NF003673">
    <property type="entry name" value="PRK05298.1"/>
    <property type="match status" value="1"/>
</dbReference>
<dbReference type="NCBIfam" id="TIGR00631">
    <property type="entry name" value="uvrb"/>
    <property type="match status" value="1"/>
</dbReference>
<dbReference type="PANTHER" id="PTHR24029">
    <property type="entry name" value="UVRABC SYSTEM PROTEIN B"/>
    <property type="match status" value="1"/>
</dbReference>
<dbReference type="PANTHER" id="PTHR24029:SF0">
    <property type="entry name" value="UVRABC SYSTEM PROTEIN B"/>
    <property type="match status" value="1"/>
</dbReference>
<dbReference type="Pfam" id="PF00271">
    <property type="entry name" value="Helicase_C"/>
    <property type="match status" value="1"/>
</dbReference>
<dbReference type="Pfam" id="PF04851">
    <property type="entry name" value="ResIII"/>
    <property type="match status" value="1"/>
</dbReference>
<dbReference type="Pfam" id="PF02151">
    <property type="entry name" value="UVR"/>
    <property type="match status" value="1"/>
</dbReference>
<dbReference type="Pfam" id="PF12344">
    <property type="entry name" value="UvrB"/>
    <property type="match status" value="1"/>
</dbReference>
<dbReference type="Pfam" id="PF17757">
    <property type="entry name" value="UvrB_inter"/>
    <property type="match status" value="1"/>
</dbReference>
<dbReference type="SMART" id="SM00487">
    <property type="entry name" value="DEXDc"/>
    <property type="match status" value="1"/>
</dbReference>
<dbReference type="SMART" id="SM00490">
    <property type="entry name" value="HELICc"/>
    <property type="match status" value="1"/>
</dbReference>
<dbReference type="SUPFAM" id="SSF46600">
    <property type="entry name" value="C-terminal UvrC-binding domain of UvrB"/>
    <property type="match status" value="1"/>
</dbReference>
<dbReference type="SUPFAM" id="SSF52540">
    <property type="entry name" value="P-loop containing nucleoside triphosphate hydrolases"/>
    <property type="match status" value="2"/>
</dbReference>
<dbReference type="PROSITE" id="PS51192">
    <property type="entry name" value="HELICASE_ATP_BIND_1"/>
    <property type="match status" value="1"/>
</dbReference>
<dbReference type="PROSITE" id="PS51194">
    <property type="entry name" value="HELICASE_CTER"/>
    <property type="match status" value="1"/>
</dbReference>
<dbReference type="PROSITE" id="PS50151">
    <property type="entry name" value="UVR"/>
    <property type="match status" value="1"/>
</dbReference>
<proteinExistence type="inferred from homology"/>
<name>UVRB_STAS1</name>
<comment type="function">
    <text evidence="1">The UvrABC repair system catalyzes the recognition and processing of DNA lesions. A damage recognition complex composed of 2 UvrA and 2 UvrB subunits scans DNA for abnormalities. Upon binding of the UvrA(2)B(2) complex to a putative damaged site, the DNA wraps around one UvrB monomer. DNA wrap is dependent on ATP binding by UvrB and probably causes local melting of the DNA helix, facilitating insertion of UvrB beta-hairpin between the DNA strands. Then UvrB probes one DNA strand for the presence of a lesion. If a lesion is found the UvrA subunits dissociate and the UvrB-DNA preincision complex is formed. This complex is subsequently bound by UvrC and the second UvrB is released. If no lesion is found, the DNA wraps around the other UvrB subunit that will check the other stand for damage.</text>
</comment>
<comment type="subunit">
    <text evidence="1">Forms a heterotetramer with UvrA during the search for lesions. Interacts with UvrC in an incision complex.</text>
</comment>
<comment type="subcellular location">
    <subcellularLocation>
        <location evidence="1">Cytoplasm</location>
    </subcellularLocation>
</comment>
<comment type="domain">
    <text evidence="1">The beta-hairpin motif is involved in DNA binding.</text>
</comment>
<comment type="similarity">
    <text evidence="1">Belongs to the UvrB family.</text>
</comment>
<keyword id="KW-0067">ATP-binding</keyword>
<keyword id="KW-0963">Cytoplasm</keyword>
<keyword id="KW-0227">DNA damage</keyword>
<keyword id="KW-0228">DNA excision</keyword>
<keyword id="KW-0234">DNA repair</keyword>
<keyword id="KW-0267">Excision nuclease</keyword>
<keyword id="KW-0547">Nucleotide-binding</keyword>
<keyword id="KW-1185">Reference proteome</keyword>
<keyword id="KW-0742">SOS response</keyword>
<feature type="chain" id="PRO_0000227364" description="UvrABC system protein B">
    <location>
        <begin position="1"/>
        <end position="660"/>
    </location>
</feature>
<feature type="domain" description="Helicase ATP-binding" evidence="1">
    <location>
        <begin position="27"/>
        <end position="414"/>
    </location>
</feature>
<feature type="domain" description="Helicase C-terminal" evidence="1">
    <location>
        <begin position="431"/>
        <end position="593"/>
    </location>
</feature>
<feature type="domain" description="UVR" evidence="1">
    <location>
        <begin position="624"/>
        <end position="659"/>
    </location>
</feature>
<feature type="region of interest" description="Disordered" evidence="2">
    <location>
        <begin position="603"/>
        <end position="622"/>
    </location>
</feature>
<feature type="short sequence motif" description="Beta-hairpin">
    <location>
        <begin position="93"/>
        <end position="116"/>
    </location>
</feature>
<feature type="binding site" evidence="1">
    <location>
        <begin position="40"/>
        <end position="47"/>
    </location>
    <ligand>
        <name>ATP</name>
        <dbReference type="ChEBI" id="CHEBI:30616"/>
    </ligand>
</feature>
<protein>
    <recommendedName>
        <fullName evidence="1">UvrABC system protein B</fullName>
        <shortName evidence="1">Protein UvrB</shortName>
    </recommendedName>
    <alternativeName>
        <fullName evidence="1">Excinuclease ABC subunit B</fullName>
    </alternativeName>
</protein>
<gene>
    <name evidence="1" type="primary">uvrB</name>
    <name type="ordered locus">SSP1959</name>
</gene>
<organism>
    <name type="scientific">Staphylococcus saprophyticus subsp. saprophyticus (strain ATCC 15305 / DSM 20229 / NCIMB 8711 / NCTC 7292 / S-41)</name>
    <dbReference type="NCBI Taxonomy" id="342451"/>
    <lineage>
        <taxon>Bacteria</taxon>
        <taxon>Bacillati</taxon>
        <taxon>Bacillota</taxon>
        <taxon>Bacilli</taxon>
        <taxon>Bacillales</taxon>
        <taxon>Staphylococcaceae</taxon>
        <taxon>Staphylococcus</taxon>
    </lineage>
</organism>
<sequence>MEHYPFKLHSEFEPQGDQPEAIQKIVNGVNEGKRHQTLLGATGTGKTFTMSNVIKQVGKPTLIIAHNKTLAGQLYSEFKEFFPENRVEYFVSYYDYYQPEAYVPSTDTFIEKDASINDEIDQLRHSATSALFERDDVIVIASVSCIYGLGNPEEYRDLVVSIRAGMEMDRSELLKKLVDVQYTRNDIDFRRGTFRVRGDVVEIFPASREEMCIRVEFFGDEIDRIREVNYLTGEVLRERDHFAIFPASHFVTREEKMKSAIQRIENELEERLAELNAENKLLEAQRLEQRTNYDLEMMREMGFCSGIENYSVHLTLRPMGSTPYTLLDYFGDDWLVMIDESHVTLPQIRGMYNGDRARKQVLVDHGFRLPSALDNRPLKFEEFEEKTKQLVYVSATPGPFELEHTDEMVQQIIRPTGLLDPKIEVRPTENQIDDLLGEIQDRIDRNERVLVTTLTKKMSEDLTIYLKEAGIKVNYLHSEIKTLERIEIIRDLRMGTYDVIVGINLLREGIDIPEVSLVVILDADKEGFLRSQRSLVQTIGRAARNSRGEVIMYGDKITDSMRYALDETERRRTIQEAYNEKHNITPTTINKKIHDVISATVENDETNEQQQTEVPKKMTKKEREKTIANIEKEMKQAAKDLDFEKATELRDMLFELKAEG</sequence>
<accession>Q49VV6</accession>